<comment type="function">
    <text evidence="1">NDH shuttles electrons from NAD(P)H:plastoquinone, via FMN and iron-sulfur (Fe-S) centers, to quinones in the photosynthetic chain and possibly in a chloroplast respiratory chain. The immediate electron acceptor for the enzyme in this species is believed to be plastoquinone. Couples the redox reaction to proton translocation, and thus conserves the redox energy in a proton gradient (By similarity).</text>
</comment>
<comment type="catalytic activity">
    <reaction>
        <text>a plastoquinone + NADH + (n+1) H(+)(in) = a plastoquinol + NAD(+) + n H(+)(out)</text>
        <dbReference type="Rhea" id="RHEA:42608"/>
        <dbReference type="Rhea" id="RHEA-COMP:9561"/>
        <dbReference type="Rhea" id="RHEA-COMP:9562"/>
        <dbReference type="ChEBI" id="CHEBI:15378"/>
        <dbReference type="ChEBI" id="CHEBI:17757"/>
        <dbReference type="ChEBI" id="CHEBI:57540"/>
        <dbReference type="ChEBI" id="CHEBI:57945"/>
        <dbReference type="ChEBI" id="CHEBI:62192"/>
    </reaction>
</comment>
<comment type="catalytic activity">
    <reaction>
        <text>a plastoquinone + NADPH + (n+1) H(+)(in) = a plastoquinol + NADP(+) + n H(+)(out)</text>
        <dbReference type="Rhea" id="RHEA:42612"/>
        <dbReference type="Rhea" id="RHEA-COMP:9561"/>
        <dbReference type="Rhea" id="RHEA-COMP:9562"/>
        <dbReference type="ChEBI" id="CHEBI:15378"/>
        <dbReference type="ChEBI" id="CHEBI:17757"/>
        <dbReference type="ChEBI" id="CHEBI:57783"/>
        <dbReference type="ChEBI" id="CHEBI:58349"/>
        <dbReference type="ChEBI" id="CHEBI:62192"/>
    </reaction>
</comment>
<comment type="subunit">
    <text evidence="1">NDH is composed of at least 16 different subunits, 5 of which are encoded in the nucleus.</text>
</comment>
<comment type="subcellular location">
    <subcellularLocation>
        <location evidence="1">Plastid</location>
        <location evidence="1">Chloroplast thylakoid membrane</location>
        <topology evidence="1">Multi-pass membrane protein</topology>
    </subcellularLocation>
</comment>
<comment type="similarity">
    <text evidence="3">Belongs to the complex I subunit 6 family.</text>
</comment>
<reference key="1">
    <citation type="journal article" date="2007" name="BMC Biol.">
        <title>A clade uniting the green algae Mesostigma viride and Chlorokybus atmophyticus represents the deepest branch of the Streptophyta in chloroplast genome-based phylogenies.</title>
        <authorList>
            <person name="Lemieux C."/>
            <person name="Otis C."/>
            <person name="Turmel M."/>
        </authorList>
    </citation>
    <scope>NUCLEOTIDE SEQUENCE [LARGE SCALE GENOMIC DNA]</scope>
    <source>
        <strain>SAG 48.80</strain>
    </source>
</reference>
<accession>Q19V56</accession>
<geneLocation type="chloroplast"/>
<sequence length="214" mass="22364">MILAEGVQKFSLFFLEGAVLVGALGVVLLPNILYSAFLLGGVLMSIAGIYLLLNADFVAAAQVLIYVGAINVLILFAIMLVNKNDGRVAAGTSNSSGVTNNIIGLTCIGLAGFLIDMIVTTPWLPKGVAVATSLSAKADSTAAQTQLKGSISIIGLHIFSDFLLPFEVISLLLLVTLVGAIVIARRERLSDLEISKISLLNLPDPSNGKTPSLK</sequence>
<feature type="chain" id="PRO_0000360240" description="NAD(P)H-quinone oxidoreductase subunit 6, chloroplastic">
    <location>
        <begin position="1"/>
        <end position="214"/>
    </location>
</feature>
<feature type="transmembrane region" description="Helical" evidence="2">
    <location>
        <begin position="10"/>
        <end position="30"/>
    </location>
</feature>
<feature type="transmembrane region" description="Helical" evidence="2">
    <location>
        <begin position="32"/>
        <end position="52"/>
    </location>
</feature>
<feature type="transmembrane region" description="Helical" evidence="2">
    <location>
        <begin position="61"/>
        <end position="81"/>
    </location>
</feature>
<feature type="transmembrane region" description="Helical" evidence="2">
    <location>
        <begin position="102"/>
        <end position="122"/>
    </location>
</feature>
<feature type="transmembrane region" description="Helical" evidence="2">
    <location>
        <begin position="163"/>
        <end position="183"/>
    </location>
</feature>
<protein>
    <recommendedName>
        <fullName>NAD(P)H-quinone oxidoreductase subunit 6, chloroplastic</fullName>
        <ecNumber>7.1.1.-</ecNumber>
    </recommendedName>
    <alternativeName>
        <fullName>NAD(P)H dehydrogenase subunit 6</fullName>
    </alternativeName>
    <alternativeName>
        <fullName>NADH-plastoquinone oxidoreductase subunit 6</fullName>
    </alternativeName>
</protein>
<evidence type="ECO:0000250" key="1"/>
<evidence type="ECO:0000255" key="2"/>
<evidence type="ECO:0000305" key="3"/>
<dbReference type="EC" id="7.1.1.-"/>
<dbReference type="EMBL" id="DQ422812">
    <property type="protein sequence ID" value="ABD62195.2"/>
    <property type="molecule type" value="Genomic_DNA"/>
</dbReference>
<dbReference type="RefSeq" id="YP_001019164.1">
    <property type="nucleotide sequence ID" value="NC_008822.1"/>
</dbReference>
<dbReference type="SMR" id="Q19V56"/>
<dbReference type="GeneID" id="4783299"/>
<dbReference type="GO" id="GO:0009535">
    <property type="term" value="C:chloroplast thylakoid membrane"/>
    <property type="evidence" value="ECO:0007669"/>
    <property type="project" value="UniProtKB-SubCell"/>
</dbReference>
<dbReference type="GO" id="GO:0008137">
    <property type="term" value="F:NADH dehydrogenase (ubiquinone) activity"/>
    <property type="evidence" value="ECO:0007669"/>
    <property type="project" value="InterPro"/>
</dbReference>
<dbReference type="GO" id="GO:0048038">
    <property type="term" value="F:quinone binding"/>
    <property type="evidence" value="ECO:0007669"/>
    <property type="project" value="UniProtKB-KW"/>
</dbReference>
<dbReference type="Gene3D" id="1.20.120.1200">
    <property type="entry name" value="NADH-ubiquinone/plastoquinone oxidoreductase chain 6, subunit NuoJ"/>
    <property type="match status" value="1"/>
</dbReference>
<dbReference type="InterPro" id="IPR001457">
    <property type="entry name" value="NADH_UbQ/plastoQ_OxRdtase_su6"/>
</dbReference>
<dbReference type="InterPro" id="IPR042106">
    <property type="entry name" value="Nuo/plastoQ_OxRdtase_6_NuoJ"/>
</dbReference>
<dbReference type="NCBIfam" id="NF005163">
    <property type="entry name" value="PRK06638.1-3"/>
    <property type="match status" value="1"/>
</dbReference>
<dbReference type="PANTHER" id="PTHR33269">
    <property type="entry name" value="NADH-UBIQUINONE OXIDOREDUCTASE CHAIN 6"/>
    <property type="match status" value="1"/>
</dbReference>
<dbReference type="PANTHER" id="PTHR33269:SF17">
    <property type="entry name" value="NADH-UBIQUINONE OXIDOREDUCTASE CHAIN 6"/>
    <property type="match status" value="1"/>
</dbReference>
<dbReference type="Pfam" id="PF00499">
    <property type="entry name" value="Oxidored_q3"/>
    <property type="match status" value="1"/>
</dbReference>
<proteinExistence type="inferred from homology"/>
<keyword id="KW-0150">Chloroplast</keyword>
<keyword id="KW-0472">Membrane</keyword>
<keyword id="KW-0520">NAD</keyword>
<keyword id="KW-0521">NADP</keyword>
<keyword id="KW-0934">Plastid</keyword>
<keyword id="KW-0618">Plastoquinone</keyword>
<keyword id="KW-0874">Quinone</keyword>
<keyword id="KW-0793">Thylakoid</keyword>
<keyword id="KW-1278">Translocase</keyword>
<keyword id="KW-0812">Transmembrane</keyword>
<keyword id="KW-1133">Transmembrane helix</keyword>
<keyword id="KW-0813">Transport</keyword>
<name>NU6C_CHLAT</name>
<organism>
    <name type="scientific">Chlorokybus atmophyticus</name>
    <name type="common">Soil alga</name>
    <dbReference type="NCBI Taxonomy" id="3144"/>
    <lineage>
        <taxon>Eukaryota</taxon>
        <taxon>Viridiplantae</taxon>
        <taxon>Streptophyta</taxon>
        <taxon>Chlorokybophyceae</taxon>
        <taxon>Chlorokybales</taxon>
        <taxon>Chlorokybaceae</taxon>
        <taxon>Chlorokybus</taxon>
    </lineage>
</organism>
<gene>
    <name type="primary">ndhG</name>
</gene>